<accession>Q8Z3Z9</accession>
<organism>
    <name type="scientific">Salmonella typhi</name>
    <dbReference type="NCBI Taxonomy" id="90370"/>
    <lineage>
        <taxon>Bacteria</taxon>
        <taxon>Pseudomonadati</taxon>
        <taxon>Pseudomonadota</taxon>
        <taxon>Gammaproteobacteria</taxon>
        <taxon>Enterobacterales</taxon>
        <taxon>Enterobacteriaceae</taxon>
        <taxon>Salmonella</taxon>
    </lineage>
</organism>
<evidence type="ECO:0000255" key="1">
    <source>
        <dbReference type="HAMAP-Rule" id="MF_00687"/>
    </source>
</evidence>
<name>KDUI_SALTI</name>
<sequence>MDVRQSIHSEHAKTLDTQALRREFLIENIFVADEYTMVYSHIDRIIVGGIMPVSHPVEIGGEVGKQLGVSRLLDRRELGVINIGGAGAIIVDGQRHDIGHRDALYIGKGAKELVFVSNEASRPAKFYYNCAPAHTAYPTKKVSPADVAPVTLGDNLTSNRRTINKYFVPDVLETCQLSMGLTELAPGNLWNTMPCHTHERRMEVYLYFNMEEDSCVFHMMGQPQETRHIVMRNEQAVISPSWSIHSGVGTKAYTFIWGMVGENQVFDDMDHVAVQDLR</sequence>
<gene>
    <name evidence="1" type="primary">kduI</name>
    <name type="ordered locus">STY3163</name>
    <name type="ordered locus">t2928</name>
</gene>
<protein>
    <recommendedName>
        <fullName evidence="1">4-deoxy-L-threo-5-hexosulose-uronate ketol-isomerase</fullName>
        <ecNumber evidence="1">5.3.1.17</ecNumber>
    </recommendedName>
    <alternativeName>
        <fullName evidence="1">5-keto-4-deoxyuronate isomerase</fullName>
    </alternativeName>
    <alternativeName>
        <fullName evidence="1">DKI isomerase</fullName>
    </alternativeName>
</protein>
<dbReference type="EC" id="5.3.1.17" evidence="1"/>
<dbReference type="EMBL" id="AL513382">
    <property type="protein sequence ID" value="CAD02844.1"/>
    <property type="molecule type" value="Genomic_DNA"/>
</dbReference>
<dbReference type="EMBL" id="AE014613">
    <property type="protein sequence ID" value="AAO70482.1"/>
    <property type="molecule type" value="Genomic_DNA"/>
</dbReference>
<dbReference type="RefSeq" id="NP_457413.1">
    <property type="nucleotide sequence ID" value="NC_003198.1"/>
</dbReference>
<dbReference type="RefSeq" id="WP_000383270.1">
    <property type="nucleotide sequence ID" value="NZ_WSUR01000024.1"/>
</dbReference>
<dbReference type="SMR" id="Q8Z3Z9"/>
<dbReference type="STRING" id="220341.gene:17587044"/>
<dbReference type="DNASU" id="1249454"/>
<dbReference type="KEGG" id="stt:t2928"/>
<dbReference type="KEGG" id="sty:STY3163"/>
<dbReference type="PATRIC" id="fig|220341.7.peg.3219"/>
<dbReference type="eggNOG" id="COG3717">
    <property type="taxonomic scope" value="Bacteria"/>
</dbReference>
<dbReference type="HOGENOM" id="CLU_062609_0_0_6"/>
<dbReference type="OMA" id="CHTHDRR"/>
<dbReference type="OrthoDB" id="9770644at2"/>
<dbReference type="UniPathway" id="UPA00545">
    <property type="reaction ID" value="UER00826"/>
</dbReference>
<dbReference type="Proteomes" id="UP000000541">
    <property type="component" value="Chromosome"/>
</dbReference>
<dbReference type="Proteomes" id="UP000002670">
    <property type="component" value="Chromosome"/>
</dbReference>
<dbReference type="GO" id="GO:0008697">
    <property type="term" value="F:4-deoxy-L-threo-5-hexosulose-uronate ketol-isomerase activity"/>
    <property type="evidence" value="ECO:0007669"/>
    <property type="project" value="UniProtKB-UniRule"/>
</dbReference>
<dbReference type="GO" id="GO:0008270">
    <property type="term" value="F:zinc ion binding"/>
    <property type="evidence" value="ECO:0007669"/>
    <property type="project" value="UniProtKB-UniRule"/>
</dbReference>
<dbReference type="GO" id="GO:0019698">
    <property type="term" value="P:D-galacturonate catabolic process"/>
    <property type="evidence" value="ECO:0007669"/>
    <property type="project" value="TreeGrafter"/>
</dbReference>
<dbReference type="GO" id="GO:0042840">
    <property type="term" value="P:D-glucuronate catabolic process"/>
    <property type="evidence" value="ECO:0007669"/>
    <property type="project" value="TreeGrafter"/>
</dbReference>
<dbReference type="GO" id="GO:0045490">
    <property type="term" value="P:pectin catabolic process"/>
    <property type="evidence" value="ECO:0007669"/>
    <property type="project" value="UniProtKB-UniRule"/>
</dbReference>
<dbReference type="CDD" id="cd20491">
    <property type="entry name" value="cupin_KduI_C"/>
    <property type="match status" value="1"/>
</dbReference>
<dbReference type="CDD" id="cd20294">
    <property type="entry name" value="cupin_KduI_N"/>
    <property type="match status" value="1"/>
</dbReference>
<dbReference type="FunFam" id="2.60.120.10:FF:000018">
    <property type="entry name" value="4-deoxy-L-threo-5-hexosulose-uronate ketol-isomerase"/>
    <property type="match status" value="1"/>
</dbReference>
<dbReference type="FunFam" id="2.60.120.520:FF:000001">
    <property type="entry name" value="4-deoxy-L-threo-5-hexosulose-uronate ketol-isomerase"/>
    <property type="match status" value="1"/>
</dbReference>
<dbReference type="Gene3D" id="2.60.120.10">
    <property type="entry name" value="Jelly Rolls"/>
    <property type="match status" value="1"/>
</dbReference>
<dbReference type="Gene3D" id="2.60.120.520">
    <property type="entry name" value="pectin degrading enzyme 5-keto 4- deoxyuronate isomerase, domain 1"/>
    <property type="match status" value="1"/>
</dbReference>
<dbReference type="HAMAP" id="MF_00687">
    <property type="entry name" value="KduI"/>
    <property type="match status" value="1"/>
</dbReference>
<dbReference type="InterPro" id="IPR007045">
    <property type="entry name" value="KduI"/>
</dbReference>
<dbReference type="InterPro" id="IPR021120">
    <property type="entry name" value="KduI/IolB_isomerase"/>
</dbReference>
<dbReference type="InterPro" id="IPR027449">
    <property type="entry name" value="KduI_N"/>
</dbReference>
<dbReference type="InterPro" id="IPR014710">
    <property type="entry name" value="RmlC-like_jellyroll"/>
</dbReference>
<dbReference type="InterPro" id="IPR011051">
    <property type="entry name" value="RmlC_Cupin_sf"/>
</dbReference>
<dbReference type="NCBIfam" id="NF002091">
    <property type="entry name" value="PRK00924.1"/>
    <property type="match status" value="1"/>
</dbReference>
<dbReference type="PANTHER" id="PTHR38461">
    <property type="entry name" value="4-DEOXY-L-THREO-5-HEXOSULOSE-URONATE KETOL-ISOMERASE"/>
    <property type="match status" value="1"/>
</dbReference>
<dbReference type="PANTHER" id="PTHR38461:SF1">
    <property type="entry name" value="4-DEOXY-L-THREO-5-HEXOSULOSE-URONATE KETOL-ISOMERASE"/>
    <property type="match status" value="1"/>
</dbReference>
<dbReference type="Pfam" id="PF04962">
    <property type="entry name" value="KduI"/>
    <property type="match status" value="1"/>
</dbReference>
<dbReference type="PIRSF" id="PIRSF006625">
    <property type="entry name" value="KduI"/>
    <property type="match status" value="1"/>
</dbReference>
<dbReference type="SUPFAM" id="SSF51182">
    <property type="entry name" value="RmlC-like cupins"/>
    <property type="match status" value="1"/>
</dbReference>
<proteinExistence type="inferred from homology"/>
<keyword id="KW-0413">Isomerase</keyword>
<keyword id="KW-0479">Metal-binding</keyword>
<keyword id="KW-0862">Zinc</keyword>
<reference key="1">
    <citation type="journal article" date="2001" name="Nature">
        <title>Complete genome sequence of a multiple drug resistant Salmonella enterica serovar Typhi CT18.</title>
        <authorList>
            <person name="Parkhill J."/>
            <person name="Dougan G."/>
            <person name="James K.D."/>
            <person name="Thomson N.R."/>
            <person name="Pickard D."/>
            <person name="Wain J."/>
            <person name="Churcher C.M."/>
            <person name="Mungall K.L."/>
            <person name="Bentley S.D."/>
            <person name="Holden M.T.G."/>
            <person name="Sebaihia M."/>
            <person name="Baker S."/>
            <person name="Basham D."/>
            <person name="Brooks K."/>
            <person name="Chillingworth T."/>
            <person name="Connerton P."/>
            <person name="Cronin A."/>
            <person name="Davis P."/>
            <person name="Davies R.M."/>
            <person name="Dowd L."/>
            <person name="White N."/>
            <person name="Farrar J."/>
            <person name="Feltwell T."/>
            <person name="Hamlin N."/>
            <person name="Haque A."/>
            <person name="Hien T.T."/>
            <person name="Holroyd S."/>
            <person name="Jagels K."/>
            <person name="Krogh A."/>
            <person name="Larsen T.S."/>
            <person name="Leather S."/>
            <person name="Moule S."/>
            <person name="O'Gaora P."/>
            <person name="Parry C."/>
            <person name="Quail M.A."/>
            <person name="Rutherford K.M."/>
            <person name="Simmonds M."/>
            <person name="Skelton J."/>
            <person name="Stevens K."/>
            <person name="Whitehead S."/>
            <person name="Barrell B.G."/>
        </authorList>
    </citation>
    <scope>NUCLEOTIDE SEQUENCE [LARGE SCALE GENOMIC DNA]</scope>
    <source>
        <strain>CT18</strain>
    </source>
</reference>
<reference key="2">
    <citation type="journal article" date="2003" name="J. Bacteriol.">
        <title>Comparative genomics of Salmonella enterica serovar Typhi strains Ty2 and CT18.</title>
        <authorList>
            <person name="Deng W."/>
            <person name="Liou S.-R."/>
            <person name="Plunkett G. III"/>
            <person name="Mayhew G.F."/>
            <person name="Rose D.J."/>
            <person name="Burland V."/>
            <person name="Kodoyianni V."/>
            <person name="Schwartz D.C."/>
            <person name="Blattner F.R."/>
        </authorList>
    </citation>
    <scope>NUCLEOTIDE SEQUENCE [LARGE SCALE GENOMIC DNA]</scope>
    <source>
        <strain>ATCC 700931 / Ty2</strain>
    </source>
</reference>
<comment type="function">
    <text evidence="1">Catalyzes the isomerization of 5-dehydro-4-deoxy-D-glucuronate to 3-deoxy-D-glycero-2,5-hexodiulosonate.</text>
</comment>
<comment type="catalytic activity">
    <reaction evidence="1">
        <text>5-dehydro-4-deoxy-D-glucuronate = 3-deoxy-D-glycero-2,5-hexodiulosonate</text>
        <dbReference type="Rhea" id="RHEA:23896"/>
        <dbReference type="ChEBI" id="CHEBI:17117"/>
        <dbReference type="ChEBI" id="CHEBI:29071"/>
        <dbReference type="EC" id="5.3.1.17"/>
    </reaction>
</comment>
<comment type="cofactor">
    <cofactor evidence="1">
        <name>Zn(2+)</name>
        <dbReference type="ChEBI" id="CHEBI:29105"/>
    </cofactor>
    <text evidence="1">Binds 1 zinc ion per subunit.</text>
</comment>
<comment type="pathway">
    <text evidence="1">Glycan metabolism; pectin degradation; 2-dehydro-3-deoxy-D-gluconate from pectin: step 4/5.</text>
</comment>
<comment type="similarity">
    <text evidence="1">Belongs to the KduI family.</text>
</comment>
<feature type="chain" id="PRO_0000215495" description="4-deoxy-L-threo-5-hexosulose-uronate ketol-isomerase">
    <location>
        <begin position="1"/>
        <end position="278"/>
    </location>
</feature>
<feature type="binding site" evidence="1">
    <location>
        <position position="196"/>
    </location>
    <ligand>
        <name>Zn(2+)</name>
        <dbReference type="ChEBI" id="CHEBI:29105"/>
    </ligand>
</feature>
<feature type="binding site" evidence="1">
    <location>
        <position position="198"/>
    </location>
    <ligand>
        <name>Zn(2+)</name>
        <dbReference type="ChEBI" id="CHEBI:29105"/>
    </ligand>
</feature>
<feature type="binding site" evidence="1">
    <location>
        <position position="203"/>
    </location>
    <ligand>
        <name>Zn(2+)</name>
        <dbReference type="ChEBI" id="CHEBI:29105"/>
    </ligand>
</feature>
<feature type="binding site" evidence="1">
    <location>
        <position position="245"/>
    </location>
    <ligand>
        <name>Zn(2+)</name>
        <dbReference type="ChEBI" id="CHEBI:29105"/>
    </ligand>
</feature>